<reference key="1">
    <citation type="journal article" date="2018" name="J. Am. Chem. Soc.">
        <title>Biosynthesis of long-chain N-acyl amide by a truncated polyketide synthase-nonribosomal peptide synthetase hybrid megasynthase in fungi.</title>
        <authorList>
            <person name="Hai Y."/>
            <person name="Tang Y."/>
        </authorList>
    </citation>
    <scope>NUCLEOTIDE SEQUENCE [GENOMIC DNA]</scope>
    <scope>FUNCTION</scope>
    <scope>PATHWAY</scope>
    <source>
        <strain>ATCC 26942 / CBS 387.67 / CCM F-175 / VKM F-2091</strain>
    </source>
</reference>
<accession>A0A2L0P0K1</accession>
<organism>
    <name type="scientific">Talaromyces wortmannii</name>
    <name type="common">Penicillium wortmannii</name>
    <dbReference type="NCBI Taxonomy" id="28567"/>
    <lineage>
        <taxon>Eukaryota</taxon>
        <taxon>Fungi</taxon>
        <taxon>Dikarya</taxon>
        <taxon>Ascomycota</taxon>
        <taxon>Pezizomycotina</taxon>
        <taxon>Eurotiomycetes</taxon>
        <taxon>Eurotiomycetidae</taxon>
        <taxon>Eurotiales</taxon>
        <taxon>Trichocomaceae</taxon>
        <taxon>Talaromyces</taxon>
        <taxon>Talaromyces sect. Islandici</taxon>
    </lineage>
</organism>
<sequence length="348" mass="37955">MASGKAGGASALFSEATQAEQLDSHTYRVNLNQGFCIGAVPNGGYTSACMLAAASKHLGPRGQPDTLTAHFEYPNRTSTGPAIVVIEDVKLGRQISTLHLTLWQGGLLSQAPWIDRSVSRRIVLAYTTHTNLRTFSGISMPTGYEVTPAAELPSVSDFEALKTHGADDAWAESKLPKGWAAMMLSLTQWRFYVPRKEPLSPGVLDMWIRLASGEKITQGALAYVVDSFPHNMHTFLAAPALRELLNASPERSGDSEVKDVRKKDQQRAEMWFPTVVMNIEAKTALPEEGVEWLSVRVSSKQIKEGKFDLEVLVRDTDGEMVALSNHVAMILSVERNTGKKSGSSKASL</sequence>
<dbReference type="EC" id="3.1.2.-" evidence="3"/>
<dbReference type="EMBL" id="MG837518">
    <property type="protein sequence ID" value="AUY61969.1"/>
    <property type="molecule type" value="Genomic_DNA"/>
</dbReference>
<dbReference type="EMBL" id="MH399766">
    <property type="protein sequence ID" value="QBC19709.1"/>
    <property type="molecule type" value="Genomic_DNA"/>
</dbReference>
<dbReference type="SMR" id="A0A2L0P0K1"/>
<dbReference type="GO" id="GO:0016787">
    <property type="term" value="F:hydrolase activity"/>
    <property type="evidence" value="ECO:0007669"/>
    <property type="project" value="UniProtKB-KW"/>
</dbReference>
<dbReference type="Gene3D" id="2.40.160.210">
    <property type="entry name" value="Acyl-CoA thioesterase, double hotdog domain"/>
    <property type="match status" value="2"/>
</dbReference>
<dbReference type="InterPro" id="IPR049450">
    <property type="entry name" value="ACOT8-like_C"/>
</dbReference>
<dbReference type="InterPro" id="IPR042171">
    <property type="entry name" value="Acyl-CoA_hotdog"/>
</dbReference>
<dbReference type="InterPro" id="IPR029069">
    <property type="entry name" value="HotDog_dom_sf"/>
</dbReference>
<dbReference type="InterPro" id="IPR052389">
    <property type="entry name" value="Sec_Metab_Biosynth-Assoc"/>
</dbReference>
<dbReference type="InterPro" id="IPR049449">
    <property type="entry name" value="TesB_ACOT8-like_N"/>
</dbReference>
<dbReference type="PANTHER" id="PTHR38110">
    <property type="entry name" value="CHROMOSOME 23, WHOLE GENOME SHOTGUN SEQUENCE"/>
    <property type="match status" value="1"/>
</dbReference>
<dbReference type="PANTHER" id="PTHR38110:SF1">
    <property type="entry name" value="THIOESTERASE DOMAIN-CONTAINING PROTEIN"/>
    <property type="match status" value="1"/>
</dbReference>
<dbReference type="Pfam" id="PF13622">
    <property type="entry name" value="4HBT_3"/>
    <property type="match status" value="1"/>
</dbReference>
<dbReference type="Pfam" id="PF20789">
    <property type="entry name" value="4HBT_3C"/>
    <property type="match status" value="1"/>
</dbReference>
<dbReference type="SUPFAM" id="SSF54637">
    <property type="entry name" value="Thioesterase/thiol ester dehydrase-isomerase"/>
    <property type="match status" value="2"/>
</dbReference>
<evidence type="ECO:0000269" key="1">
    <source>
    </source>
</evidence>
<evidence type="ECO:0000303" key="2">
    <source>
    </source>
</evidence>
<evidence type="ECO:0000305" key="3">
    <source>
    </source>
</evidence>
<protein>
    <recommendedName>
        <fullName evidence="2">Thioesterase-like protein TwmA</fullName>
        <ecNumber evidence="3">3.1.2.-</ecNumber>
    </recommendedName>
    <alternativeName>
        <fullName evidence="2">Wortmanamides biosynthesis cluster protein A</fullName>
    </alternativeName>
</protein>
<feature type="chain" id="PRO_0000452487" description="Thioesterase-like protein TwmA">
    <location>
        <begin position="1"/>
        <end position="348"/>
    </location>
</feature>
<name>TWMA_TALWO</name>
<keyword id="KW-0378">Hydrolase</keyword>
<gene>
    <name evidence="2" type="primary">TwmA</name>
    <name evidence="2" type="synonym">TwnA</name>
</gene>
<proteinExistence type="predicted"/>
<comment type="function">
    <text evidence="1 3">Thioesterase-like protein; part of the gene cluster that mediates the biosynthesis of wortmanamides A and B, reduced long-chain polyketides amidated with a specific omega-amino acid, 5-aminopentanoic acid (5PA) (PubMed:29343058). The PKS modules of TwmB are involved in the synthesis of the polyketide backbone, whereas the non-canonical C domain of TwmB is a bonafide condensation domain that specifically selects 5PA and catalyzes amidation to release polyketide chain (PubMed:29343058). The C domain clearly prefers C16 and C18 fatty acyl substrates, which is consistent with simultaneous formation of both octaketide and nonaketide acyl amides wortmanamides A and B (PubMed:29343058). Because TwmB lacks a designated enoylreductase (ER) domain, the required activity is provided the enoyl reductase TwmE (PubMed:29343058). The roles of the remaining enzymes have still to be clarified (Probable).</text>
</comment>
<comment type="pathway">
    <text evidence="3">Secondary metabolite biosynthesis.</text>
</comment>